<reference key="1">
    <citation type="submission" date="2006-08" db="EMBL/GenBank/DDBJ databases">
        <title>Complete sequence of Shewanella sp. MR-4.</title>
        <authorList>
            <consortium name="US DOE Joint Genome Institute"/>
            <person name="Copeland A."/>
            <person name="Lucas S."/>
            <person name="Lapidus A."/>
            <person name="Barry K."/>
            <person name="Detter J.C."/>
            <person name="Glavina del Rio T."/>
            <person name="Hammon N."/>
            <person name="Israni S."/>
            <person name="Dalin E."/>
            <person name="Tice H."/>
            <person name="Pitluck S."/>
            <person name="Kiss H."/>
            <person name="Brettin T."/>
            <person name="Bruce D."/>
            <person name="Han C."/>
            <person name="Tapia R."/>
            <person name="Gilna P."/>
            <person name="Schmutz J."/>
            <person name="Larimer F."/>
            <person name="Land M."/>
            <person name="Hauser L."/>
            <person name="Kyrpides N."/>
            <person name="Mikhailova N."/>
            <person name="Nealson K."/>
            <person name="Konstantinidis K."/>
            <person name="Klappenbach J."/>
            <person name="Tiedje J."/>
            <person name="Richardson P."/>
        </authorList>
    </citation>
    <scope>NUCLEOTIDE SEQUENCE [LARGE SCALE GENOMIC DNA]</scope>
    <source>
        <strain>MR-4</strain>
    </source>
</reference>
<feature type="chain" id="PRO_1000054140" description="Cyclic pyranopterin monophosphate synthase">
    <location>
        <begin position="1"/>
        <end position="159"/>
    </location>
</feature>
<feature type="active site" evidence="1">
    <location>
        <position position="129"/>
    </location>
</feature>
<feature type="binding site" evidence="1">
    <location>
        <begin position="76"/>
        <end position="78"/>
    </location>
    <ligand>
        <name>substrate</name>
    </ligand>
</feature>
<feature type="binding site" evidence="1">
    <location>
        <begin position="114"/>
        <end position="115"/>
    </location>
    <ligand>
        <name>substrate</name>
    </ligand>
</feature>
<dbReference type="EC" id="4.6.1.17" evidence="1"/>
<dbReference type="EMBL" id="CP000446">
    <property type="protein sequence ID" value="ABI37354.1"/>
    <property type="molecule type" value="Genomic_DNA"/>
</dbReference>
<dbReference type="RefSeq" id="WP_011074083.1">
    <property type="nucleotide sequence ID" value="NC_008321.1"/>
</dbReference>
<dbReference type="SMR" id="Q0HNL3"/>
<dbReference type="GeneID" id="94726265"/>
<dbReference type="KEGG" id="she:Shewmr4_0274"/>
<dbReference type="HOGENOM" id="CLU_074693_1_1_6"/>
<dbReference type="UniPathway" id="UPA00344"/>
<dbReference type="GO" id="GO:0061799">
    <property type="term" value="F:cyclic pyranopterin monophosphate synthase activity"/>
    <property type="evidence" value="ECO:0007669"/>
    <property type="project" value="UniProtKB-UniRule"/>
</dbReference>
<dbReference type="GO" id="GO:0061798">
    <property type="term" value="F:GTP 3',8'-cyclase activity"/>
    <property type="evidence" value="ECO:0007669"/>
    <property type="project" value="TreeGrafter"/>
</dbReference>
<dbReference type="GO" id="GO:0006777">
    <property type="term" value="P:Mo-molybdopterin cofactor biosynthetic process"/>
    <property type="evidence" value="ECO:0007669"/>
    <property type="project" value="UniProtKB-UniRule"/>
</dbReference>
<dbReference type="CDD" id="cd01420">
    <property type="entry name" value="MoaC_PE"/>
    <property type="match status" value="1"/>
</dbReference>
<dbReference type="FunFam" id="3.30.70.640:FF:000001">
    <property type="entry name" value="Cyclic pyranopterin monophosphate synthase"/>
    <property type="match status" value="1"/>
</dbReference>
<dbReference type="Gene3D" id="3.30.70.640">
    <property type="entry name" value="Molybdopterin cofactor biosynthesis C (MoaC) domain"/>
    <property type="match status" value="1"/>
</dbReference>
<dbReference type="HAMAP" id="MF_01224_B">
    <property type="entry name" value="MoaC_B"/>
    <property type="match status" value="1"/>
</dbReference>
<dbReference type="InterPro" id="IPR023045">
    <property type="entry name" value="MoaC"/>
</dbReference>
<dbReference type="InterPro" id="IPR047594">
    <property type="entry name" value="MoaC_bact/euk"/>
</dbReference>
<dbReference type="InterPro" id="IPR036522">
    <property type="entry name" value="MoaC_sf"/>
</dbReference>
<dbReference type="InterPro" id="IPR050105">
    <property type="entry name" value="MoCo_biosynth_MoaA/MoaC"/>
</dbReference>
<dbReference type="InterPro" id="IPR002820">
    <property type="entry name" value="Mopterin_CF_biosynth-C_dom"/>
</dbReference>
<dbReference type="NCBIfam" id="TIGR00581">
    <property type="entry name" value="moaC"/>
    <property type="match status" value="1"/>
</dbReference>
<dbReference type="NCBIfam" id="NF006870">
    <property type="entry name" value="PRK09364.1"/>
    <property type="match status" value="1"/>
</dbReference>
<dbReference type="PANTHER" id="PTHR22960:SF0">
    <property type="entry name" value="MOLYBDENUM COFACTOR BIOSYNTHESIS PROTEIN 1"/>
    <property type="match status" value="1"/>
</dbReference>
<dbReference type="PANTHER" id="PTHR22960">
    <property type="entry name" value="MOLYBDOPTERIN COFACTOR SYNTHESIS PROTEIN A"/>
    <property type="match status" value="1"/>
</dbReference>
<dbReference type="Pfam" id="PF01967">
    <property type="entry name" value="MoaC"/>
    <property type="match status" value="1"/>
</dbReference>
<dbReference type="SUPFAM" id="SSF55040">
    <property type="entry name" value="Molybdenum cofactor biosynthesis protein C, MoaC"/>
    <property type="match status" value="1"/>
</dbReference>
<name>MOAC_SHESM</name>
<proteinExistence type="inferred from homology"/>
<gene>
    <name evidence="1" type="primary">moaC</name>
    <name type="ordered locus">Shewmr4_0274</name>
</gene>
<sequence length="159" mass="17294">MSNVFTHINADGNAHMVDVTEKAVTEREARAEAFIEMASTTLEMIMSGSHHKGDVFATARIAGIQAAKKTSDLIPLCHPLMLTKVEVELEAQPEHNRVRITSLCKLSGKTGVEMEALTAASVAALTIYDMCKAVQKDMVISQVRLLEKRGGKSGHFKAE</sequence>
<keyword id="KW-0456">Lyase</keyword>
<keyword id="KW-0501">Molybdenum cofactor biosynthesis</keyword>
<accession>Q0HNL3</accession>
<organism>
    <name type="scientific">Shewanella sp. (strain MR-4)</name>
    <dbReference type="NCBI Taxonomy" id="60480"/>
    <lineage>
        <taxon>Bacteria</taxon>
        <taxon>Pseudomonadati</taxon>
        <taxon>Pseudomonadota</taxon>
        <taxon>Gammaproteobacteria</taxon>
        <taxon>Alteromonadales</taxon>
        <taxon>Shewanellaceae</taxon>
        <taxon>Shewanella</taxon>
    </lineage>
</organism>
<protein>
    <recommendedName>
        <fullName evidence="1">Cyclic pyranopterin monophosphate synthase</fullName>
        <ecNumber evidence="1">4.6.1.17</ecNumber>
    </recommendedName>
    <alternativeName>
        <fullName evidence="1">Molybdenum cofactor biosynthesis protein C</fullName>
    </alternativeName>
</protein>
<comment type="function">
    <text evidence="1">Catalyzes the conversion of (8S)-3',8-cyclo-7,8-dihydroguanosine 5'-triphosphate to cyclic pyranopterin monophosphate (cPMP).</text>
</comment>
<comment type="catalytic activity">
    <reaction evidence="1">
        <text>(8S)-3',8-cyclo-7,8-dihydroguanosine 5'-triphosphate = cyclic pyranopterin phosphate + diphosphate</text>
        <dbReference type="Rhea" id="RHEA:49580"/>
        <dbReference type="ChEBI" id="CHEBI:33019"/>
        <dbReference type="ChEBI" id="CHEBI:59648"/>
        <dbReference type="ChEBI" id="CHEBI:131766"/>
        <dbReference type="EC" id="4.6.1.17"/>
    </reaction>
</comment>
<comment type="pathway">
    <text evidence="1">Cofactor biosynthesis; molybdopterin biosynthesis.</text>
</comment>
<comment type="subunit">
    <text evidence="1">Homohexamer; trimer of dimers.</text>
</comment>
<comment type="similarity">
    <text evidence="1">Belongs to the MoaC family.</text>
</comment>
<evidence type="ECO:0000255" key="1">
    <source>
        <dbReference type="HAMAP-Rule" id="MF_01224"/>
    </source>
</evidence>